<proteinExistence type="inferred from homology"/>
<name>HSL50_DICDI</name>
<evidence type="ECO:0000256" key="1">
    <source>
        <dbReference type="SAM" id="MobiDB-lite"/>
    </source>
</evidence>
<evidence type="ECO:0000305" key="2"/>
<gene>
    <name type="primary">hssl50</name>
    <name type="ORF">DDB_G0281015</name>
</gene>
<protein>
    <recommendedName>
        <fullName>HssA/B-like protein 50</fullName>
    </recommendedName>
</protein>
<reference key="1">
    <citation type="journal article" date="2005" name="Nature">
        <title>The genome of the social amoeba Dictyostelium discoideum.</title>
        <authorList>
            <person name="Eichinger L."/>
            <person name="Pachebat J.A."/>
            <person name="Gloeckner G."/>
            <person name="Rajandream M.A."/>
            <person name="Sucgang R."/>
            <person name="Berriman M."/>
            <person name="Song J."/>
            <person name="Olsen R."/>
            <person name="Szafranski K."/>
            <person name="Xu Q."/>
            <person name="Tunggal B."/>
            <person name="Kummerfeld S."/>
            <person name="Madera M."/>
            <person name="Konfortov B.A."/>
            <person name="Rivero F."/>
            <person name="Bankier A.T."/>
            <person name="Lehmann R."/>
            <person name="Hamlin N."/>
            <person name="Davies R."/>
            <person name="Gaudet P."/>
            <person name="Fey P."/>
            <person name="Pilcher K."/>
            <person name="Chen G."/>
            <person name="Saunders D."/>
            <person name="Sodergren E.J."/>
            <person name="Davis P."/>
            <person name="Kerhornou A."/>
            <person name="Nie X."/>
            <person name="Hall N."/>
            <person name="Anjard C."/>
            <person name="Hemphill L."/>
            <person name="Bason N."/>
            <person name="Farbrother P."/>
            <person name="Desany B."/>
            <person name="Just E."/>
            <person name="Morio T."/>
            <person name="Rost R."/>
            <person name="Churcher C.M."/>
            <person name="Cooper J."/>
            <person name="Haydock S."/>
            <person name="van Driessche N."/>
            <person name="Cronin A."/>
            <person name="Goodhead I."/>
            <person name="Muzny D.M."/>
            <person name="Mourier T."/>
            <person name="Pain A."/>
            <person name="Lu M."/>
            <person name="Harper D."/>
            <person name="Lindsay R."/>
            <person name="Hauser H."/>
            <person name="James K.D."/>
            <person name="Quiles M."/>
            <person name="Madan Babu M."/>
            <person name="Saito T."/>
            <person name="Buchrieser C."/>
            <person name="Wardroper A."/>
            <person name="Felder M."/>
            <person name="Thangavelu M."/>
            <person name="Johnson D."/>
            <person name="Knights A."/>
            <person name="Loulseged H."/>
            <person name="Mungall K.L."/>
            <person name="Oliver K."/>
            <person name="Price C."/>
            <person name="Quail M.A."/>
            <person name="Urushihara H."/>
            <person name="Hernandez J."/>
            <person name="Rabbinowitsch E."/>
            <person name="Steffen D."/>
            <person name="Sanders M."/>
            <person name="Ma J."/>
            <person name="Kohara Y."/>
            <person name="Sharp S."/>
            <person name="Simmonds M.N."/>
            <person name="Spiegler S."/>
            <person name="Tivey A."/>
            <person name="Sugano S."/>
            <person name="White B."/>
            <person name="Walker D."/>
            <person name="Woodward J.R."/>
            <person name="Winckler T."/>
            <person name="Tanaka Y."/>
            <person name="Shaulsky G."/>
            <person name="Schleicher M."/>
            <person name="Weinstock G.M."/>
            <person name="Rosenthal A."/>
            <person name="Cox E.C."/>
            <person name="Chisholm R.L."/>
            <person name="Gibbs R.A."/>
            <person name="Loomis W.F."/>
            <person name="Platzer M."/>
            <person name="Kay R.R."/>
            <person name="Williams J.G."/>
            <person name="Dear P.H."/>
            <person name="Noegel A.A."/>
            <person name="Barrell B.G."/>
            <person name="Kuspa A."/>
        </authorList>
    </citation>
    <scope>NUCLEOTIDE SEQUENCE [LARGE SCALE GENOMIC DNA]</scope>
    <source>
        <strain>AX4</strain>
    </source>
</reference>
<sequence length="98" mass="8950">MTLFSSISSISNPMTSSKSSISSFGSGTSIGSNSIACGGCGGGSGGILGSGLGIGLGLGLDLTGGSRTRGSCRGNGGSSNPVNGHGGMGGGNGSCCGI</sequence>
<keyword id="KW-1185">Reference proteome</keyword>
<accession>Q54UK8</accession>
<feature type="chain" id="PRO_0000330418" description="HssA/B-like protein 50">
    <location>
        <begin position="1"/>
        <end position="98"/>
    </location>
</feature>
<feature type="region of interest" description="Disordered" evidence="1">
    <location>
        <begin position="1"/>
        <end position="26"/>
    </location>
</feature>
<feature type="region of interest" description="Disordered" evidence="1">
    <location>
        <begin position="68"/>
        <end position="98"/>
    </location>
</feature>
<feature type="compositionally biased region" description="Gly residues" evidence="1">
    <location>
        <begin position="84"/>
        <end position="98"/>
    </location>
</feature>
<organism>
    <name type="scientific">Dictyostelium discoideum</name>
    <name type="common">Social amoeba</name>
    <dbReference type="NCBI Taxonomy" id="44689"/>
    <lineage>
        <taxon>Eukaryota</taxon>
        <taxon>Amoebozoa</taxon>
        <taxon>Evosea</taxon>
        <taxon>Eumycetozoa</taxon>
        <taxon>Dictyostelia</taxon>
        <taxon>Dictyosteliales</taxon>
        <taxon>Dictyosteliaceae</taxon>
        <taxon>Dictyostelium</taxon>
    </lineage>
</organism>
<dbReference type="EMBL" id="AAFI02000040">
    <property type="protein sequence ID" value="EAL66804.1"/>
    <property type="molecule type" value="Genomic_DNA"/>
</dbReference>
<dbReference type="RefSeq" id="XP_640768.1">
    <property type="nucleotide sequence ID" value="XM_635676.1"/>
</dbReference>
<dbReference type="FunCoup" id="Q54UK8">
    <property type="interactions" value="108"/>
</dbReference>
<dbReference type="PaxDb" id="44689-DDB0252774"/>
<dbReference type="EnsemblProtists" id="EAL66804">
    <property type="protein sequence ID" value="EAL66804"/>
    <property type="gene ID" value="DDB_G0281015"/>
</dbReference>
<dbReference type="GeneID" id="8622821"/>
<dbReference type="KEGG" id="ddi:DDB_G0281015"/>
<dbReference type="dictyBase" id="DDB_G0281015"/>
<dbReference type="HOGENOM" id="CLU_181850_0_0_1"/>
<dbReference type="InParanoid" id="Q54UK8"/>
<dbReference type="PRO" id="PR:Q54UK8"/>
<dbReference type="Proteomes" id="UP000002195">
    <property type="component" value="Chromosome 3"/>
</dbReference>
<dbReference type="GO" id="GO:0030587">
    <property type="term" value="P:sorocarp development"/>
    <property type="evidence" value="ECO:0000318"/>
    <property type="project" value="GO_Central"/>
</dbReference>
<dbReference type="InterPro" id="IPR050533">
    <property type="entry name" value="HssA/B-like_chaperone"/>
</dbReference>
<dbReference type="InterPro" id="IPR008455">
    <property type="entry name" value="HssA/B-related"/>
</dbReference>
<dbReference type="PANTHER" id="PTHR31059">
    <property type="entry name" value="HSSA/B-LIKE PROTEIN 1-RELATED-RELATED"/>
    <property type="match status" value="1"/>
</dbReference>
<dbReference type="PANTHER" id="PTHR31059:SF5">
    <property type="entry name" value="HSSA_B-LIKE PROTEIN 1-RELATED"/>
    <property type="match status" value="1"/>
</dbReference>
<dbReference type="Pfam" id="PF05710">
    <property type="entry name" value="Coiled"/>
    <property type="match status" value="1"/>
</dbReference>
<comment type="similarity">
    <text evidence="2">Belongs to the hssA/B family.</text>
</comment>